<protein>
    <recommendedName>
        <fullName>ATP synthase epsilon chain</fullName>
    </recommendedName>
    <alternativeName>
        <fullName>ATP synthase F1 sector epsilon subunit</fullName>
    </alternativeName>
    <alternativeName>
        <fullName>F-ATPase epsilon subunit</fullName>
    </alternativeName>
</protein>
<gene>
    <name type="primary">atpC</name>
    <name type="ordered locus">HI_0478</name>
</gene>
<sequence>MATFNLTIVSAEQKIFEGEVKQIQVTGVEGELGILPGHTPLLTAIKPGIVKFTLKDGNEEVIYVSGGFLEVQPNIVTVLADIAIRGSELDADRIHEAKRKAEENIVSRGSDADHDLLVAKLSKELAKLRAYELTEKLLKTRR</sequence>
<accession>P43718</accession>
<proteinExistence type="inferred from homology"/>
<organism>
    <name type="scientific">Haemophilus influenzae (strain ATCC 51907 / DSM 11121 / KW20 / Rd)</name>
    <dbReference type="NCBI Taxonomy" id="71421"/>
    <lineage>
        <taxon>Bacteria</taxon>
        <taxon>Pseudomonadati</taxon>
        <taxon>Pseudomonadota</taxon>
        <taxon>Gammaproteobacteria</taxon>
        <taxon>Pasteurellales</taxon>
        <taxon>Pasteurellaceae</taxon>
        <taxon>Haemophilus</taxon>
    </lineage>
</organism>
<keyword id="KW-0066">ATP synthesis</keyword>
<keyword id="KW-0997">Cell inner membrane</keyword>
<keyword id="KW-1003">Cell membrane</keyword>
<keyword id="KW-0139">CF(1)</keyword>
<keyword id="KW-0375">Hydrogen ion transport</keyword>
<keyword id="KW-0406">Ion transport</keyword>
<keyword id="KW-0472">Membrane</keyword>
<keyword id="KW-1185">Reference proteome</keyword>
<keyword id="KW-0813">Transport</keyword>
<name>ATPE_HAEIN</name>
<dbReference type="EMBL" id="L42023">
    <property type="protein sequence ID" value="AAC22136.1"/>
    <property type="molecule type" value="Genomic_DNA"/>
</dbReference>
<dbReference type="PIR" id="C64071">
    <property type="entry name" value="C64071"/>
</dbReference>
<dbReference type="RefSeq" id="NP_438638.1">
    <property type="nucleotide sequence ID" value="NC_000907.1"/>
</dbReference>
<dbReference type="SMR" id="P43718"/>
<dbReference type="STRING" id="71421.HI_0478"/>
<dbReference type="EnsemblBacteria" id="AAC22136">
    <property type="protein sequence ID" value="AAC22136"/>
    <property type="gene ID" value="HI_0478"/>
</dbReference>
<dbReference type="KEGG" id="hin:HI_0478"/>
<dbReference type="PATRIC" id="fig|71421.8.peg.497"/>
<dbReference type="eggNOG" id="COG0355">
    <property type="taxonomic scope" value="Bacteria"/>
</dbReference>
<dbReference type="HOGENOM" id="CLU_084338_2_0_6"/>
<dbReference type="OrthoDB" id="9791445at2"/>
<dbReference type="PhylomeDB" id="P43718"/>
<dbReference type="BioCyc" id="HINF71421:G1GJ1-493-MONOMER"/>
<dbReference type="Proteomes" id="UP000000579">
    <property type="component" value="Chromosome"/>
</dbReference>
<dbReference type="GO" id="GO:0005886">
    <property type="term" value="C:plasma membrane"/>
    <property type="evidence" value="ECO:0007669"/>
    <property type="project" value="UniProtKB-SubCell"/>
</dbReference>
<dbReference type="GO" id="GO:0045259">
    <property type="term" value="C:proton-transporting ATP synthase complex"/>
    <property type="evidence" value="ECO:0007669"/>
    <property type="project" value="UniProtKB-KW"/>
</dbReference>
<dbReference type="GO" id="GO:0005524">
    <property type="term" value="F:ATP binding"/>
    <property type="evidence" value="ECO:0007669"/>
    <property type="project" value="UniProtKB-UniRule"/>
</dbReference>
<dbReference type="GO" id="GO:0046933">
    <property type="term" value="F:proton-transporting ATP synthase activity, rotational mechanism"/>
    <property type="evidence" value="ECO:0007669"/>
    <property type="project" value="UniProtKB-UniRule"/>
</dbReference>
<dbReference type="GO" id="GO:0015986">
    <property type="term" value="P:proton motive force-driven ATP synthesis"/>
    <property type="evidence" value="ECO:0000318"/>
    <property type="project" value="GO_Central"/>
</dbReference>
<dbReference type="CDD" id="cd12152">
    <property type="entry name" value="F1-ATPase_delta"/>
    <property type="match status" value="1"/>
</dbReference>
<dbReference type="FunFam" id="2.60.15.10:FF:000001">
    <property type="entry name" value="ATP synthase epsilon chain"/>
    <property type="match status" value="1"/>
</dbReference>
<dbReference type="Gene3D" id="1.20.5.440">
    <property type="entry name" value="ATP synthase delta/epsilon subunit, C-terminal domain"/>
    <property type="match status" value="1"/>
</dbReference>
<dbReference type="Gene3D" id="2.60.15.10">
    <property type="entry name" value="F0F1 ATP synthase delta/epsilon subunit, N-terminal"/>
    <property type="match status" value="1"/>
</dbReference>
<dbReference type="HAMAP" id="MF_00530">
    <property type="entry name" value="ATP_synth_epsil_bac"/>
    <property type="match status" value="1"/>
</dbReference>
<dbReference type="InterPro" id="IPR036794">
    <property type="entry name" value="ATP_F1_dsu/esu_C_sf"/>
</dbReference>
<dbReference type="InterPro" id="IPR001469">
    <property type="entry name" value="ATP_synth_F1_dsu/esu"/>
</dbReference>
<dbReference type="InterPro" id="IPR020546">
    <property type="entry name" value="ATP_synth_F1_dsu/esu_N"/>
</dbReference>
<dbReference type="InterPro" id="IPR036771">
    <property type="entry name" value="ATPsynth_dsu/esu_N"/>
</dbReference>
<dbReference type="NCBIfam" id="TIGR01216">
    <property type="entry name" value="ATP_synt_epsi"/>
    <property type="match status" value="1"/>
</dbReference>
<dbReference type="NCBIfam" id="NF001847">
    <property type="entry name" value="PRK00571.1-4"/>
    <property type="match status" value="1"/>
</dbReference>
<dbReference type="PANTHER" id="PTHR13822">
    <property type="entry name" value="ATP SYNTHASE DELTA/EPSILON CHAIN"/>
    <property type="match status" value="1"/>
</dbReference>
<dbReference type="PANTHER" id="PTHR13822:SF10">
    <property type="entry name" value="ATP SYNTHASE EPSILON CHAIN, CHLOROPLASTIC"/>
    <property type="match status" value="1"/>
</dbReference>
<dbReference type="Pfam" id="PF02823">
    <property type="entry name" value="ATP-synt_DE_N"/>
    <property type="match status" value="1"/>
</dbReference>
<dbReference type="SUPFAM" id="SSF46604">
    <property type="entry name" value="Epsilon subunit of F1F0-ATP synthase C-terminal domain"/>
    <property type="match status" value="1"/>
</dbReference>
<dbReference type="SUPFAM" id="SSF51344">
    <property type="entry name" value="Epsilon subunit of F1F0-ATP synthase N-terminal domain"/>
    <property type="match status" value="1"/>
</dbReference>
<evidence type="ECO:0000250" key="1"/>
<evidence type="ECO:0000305" key="2"/>
<comment type="function">
    <text evidence="1">Produces ATP from ADP in the presence of a proton gradient across the membrane.</text>
</comment>
<comment type="subunit">
    <text>F-type ATPases have 2 components, CF(1) - the catalytic core - and CF(0) - the membrane proton channel. CF(1) has five subunits: alpha(3), beta(3), gamma(1), delta(1), epsilon(1). CF(0) has three main subunits: a, b and c.</text>
</comment>
<comment type="subcellular location">
    <subcellularLocation>
        <location evidence="1">Cell inner membrane</location>
        <topology evidence="1">Peripheral membrane protein</topology>
    </subcellularLocation>
</comment>
<comment type="similarity">
    <text evidence="2">Belongs to the ATPase epsilon chain family.</text>
</comment>
<reference key="1">
    <citation type="journal article" date="1995" name="Science">
        <title>Whole-genome random sequencing and assembly of Haemophilus influenzae Rd.</title>
        <authorList>
            <person name="Fleischmann R.D."/>
            <person name="Adams M.D."/>
            <person name="White O."/>
            <person name="Clayton R.A."/>
            <person name="Kirkness E.F."/>
            <person name="Kerlavage A.R."/>
            <person name="Bult C.J."/>
            <person name="Tomb J.-F."/>
            <person name="Dougherty B.A."/>
            <person name="Merrick J.M."/>
            <person name="McKenney K."/>
            <person name="Sutton G.G."/>
            <person name="FitzHugh W."/>
            <person name="Fields C.A."/>
            <person name="Gocayne J.D."/>
            <person name="Scott J.D."/>
            <person name="Shirley R."/>
            <person name="Liu L.-I."/>
            <person name="Glodek A."/>
            <person name="Kelley J.M."/>
            <person name="Weidman J.F."/>
            <person name="Phillips C.A."/>
            <person name="Spriggs T."/>
            <person name="Hedblom E."/>
            <person name="Cotton M.D."/>
            <person name="Utterback T.R."/>
            <person name="Hanna M.C."/>
            <person name="Nguyen D.T."/>
            <person name="Saudek D.M."/>
            <person name="Brandon R.C."/>
            <person name="Fine L.D."/>
            <person name="Fritchman J.L."/>
            <person name="Fuhrmann J.L."/>
            <person name="Geoghagen N.S.M."/>
            <person name="Gnehm C.L."/>
            <person name="McDonald L.A."/>
            <person name="Small K.V."/>
            <person name="Fraser C.M."/>
            <person name="Smith H.O."/>
            <person name="Venter J.C."/>
        </authorList>
    </citation>
    <scope>NUCLEOTIDE SEQUENCE [LARGE SCALE GENOMIC DNA]</scope>
    <source>
        <strain>ATCC 51907 / DSM 11121 / KW20 / Rd</strain>
    </source>
</reference>
<feature type="chain" id="PRO_0000188142" description="ATP synthase epsilon chain">
    <location>
        <begin position="1"/>
        <end position="142"/>
    </location>
</feature>